<reference key="1">
    <citation type="journal article" date="2009" name="Genome Res.">
        <title>Newly introduced genomic prophage islands are critical determinants of in vivo competitiveness in the Liverpool epidemic strain of Pseudomonas aeruginosa.</title>
        <authorList>
            <person name="Winstanley C."/>
            <person name="Langille M.G.I."/>
            <person name="Fothergill J.L."/>
            <person name="Kukavica-Ibrulj I."/>
            <person name="Paradis-Bleau C."/>
            <person name="Sanschagrin F."/>
            <person name="Thomson N.R."/>
            <person name="Winsor G.L."/>
            <person name="Quail M.A."/>
            <person name="Lennard N."/>
            <person name="Bignell A."/>
            <person name="Clarke L."/>
            <person name="Seeger K."/>
            <person name="Saunders D."/>
            <person name="Harris D."/>
            <person name="Parkhill J."/>
            <person name="Hancock R.E.W."/>
            <person name="Brinkman F.S.L."/>
            <person name="Levesque R.C."/>
        </authorList>
    </citation>
    <scope>NUCLEOTIDE SEQUENCE [LARGE SCALE GENOMIC DNA]</scope>
    <source>
        <strain>LESB58</strain>
    </source>
</reference>
<name>DER_PSEA8</name>
<feature type="chain" id="PRO_1000118650" description="GTPase Der">
    <location>
        <begin position="1"/>
        <end position="493"/>
    </location>
</feature>
<feature type="domain" description="EngA-type G 1">
    <location>
        <begin position="3"/>
        <end position="166"/>
    </location>
</feature>
<feature type="domain" description="EngA-type G 2">
    <location>
        <begin position="198"/>
        <end position="371"/>
    </location>
</feature>
<feature type="domain" description="KH-like" evidence="1">
    <location>
        <begin position="372"/>
        <end position="456"/>
    </location>
</feature>
<feature type="region of interest" description="Disordered" evidence="2">
    <location>
        <begin position="167"/>
        <end position="195"/>
    </location>
</feature>
<feature type="region of interest" description="Disordered" evidence="2">
    <location>
        <begin position="454"/>
        <end position="493"/>
    </location>
</feature>
<feature type="compositionally biased region" description="Acidic residues" evidence="2">
    <location>
        <begin position="167"/>
        <end position="184"/>
    </location>
</feature>
<feature type="compositionally biased region" description="Basic and acidic residues" evidence="2">
    <location>
        <begin position="454"/>
        <end position="463"/>
    </location>
</feature>
<feature type="compositionally biased region" description="Basic residues" evidence="2">
    <location>
        <begin position="471"/>
        <end position="493"/>
    </location>
</feature>
<feature type="binding site" evidence="1">
    <location>
        <begin position="9"/>
        <end position="16"/>
    </location>
    <ligand>
        <name>GTP</name>
        <dbReference type="ChEBI" id="CHEBI:37565"/>
        <label>1</label>
    </ligand>
</feature>
<feature type="binding site" evidence="1">
    <location>
        <begin position="56"/>
        <end position="60"/>
    </location>
    <ligand>
        <name>GTP</name>
        <dbReference type="ChEBI" id="CHEBI:37565"/>
        <label>1</label>
    </ligand>
</feature>
<feature type="binding site" evidence="1">
    <location>
        <begin position="118"/>
        <end position="121"/>
    </location>
    <ligand>
        <name>GTP</name>
        <dbReference type="ChEBI" id="CHEBI:37565"/>
        <label>1</label>
    </ligand>
</feature>
<feature type="binding site" evidence="1">
    <location>
        <begin position="204"/>
        <end position="211"/>
    </location>
    <ligand>
        <name>GTP</name>
        <dbReference type="ChEBI" id="CHEBI:37565"/>
        <label>2</label>
    </ligand>
</feature>
<feature type="binding site" evidence="1">
    <location>
        <begin position="251"/>
        <end position="255"/>
    </location>
    <ligand>
        <name>GTP</name>
        <dbReference type="ChEBI" id="CHEBI:37565"/>
        <label>2</label>
    </ligand>
</feature>
<feature type="binding site" evidence="1">
    <location>
        <begin position="316"/>
        <end position="319"/>
    </location>
    <ligand>
        <name>GTP</name>
        <dbReference type="ChEBI" id="CHEBI:37565"/>
        <label>2</label>
    </ligand>
</feature>
<keyword id="KW-0342">GTP-binding</keyword>
<keyword id="KW-0547">Nucleotide-binding</keyword>
<keyword id="KW-0677">Repeat</keyword>
<keyword id="KW-0690">Ribosome biogenesis</keyword>
<dbReference type="EMBL" id="FM209186">
    <property type="protein sequence ID" value="CAW25902.1"/>
    <property type="molecule type" value="Genomic_DNA"/>
</dbReference>
<dbReference type="RefSeq" id="WP_012613650.1">
    <property type="nucleotide sequence ID" value="NC_011770.1"/>
</dbReference>
<dbReference type="SMR" id="B7UWJ2"/>
<dbReference type="KEGG" id="pag:PLES_11751"/>
<dbReference type="HOGENOM" id="CLU_016077_6_2_6"/>
<dbReference type="GO" id="GO:0005525">
    <property type="term" value="F:GTP binding"/>
    <property type="evidence" value="ECO:0007669"/>
    <property type="project" value="UniProtKB-UniRule"/>
</dbReference>
<dbReference type="GO" id="GO:0043022">
    <property type="term" value="F:ribosome binding"/>
    <property type="evidence" value="ECO:0007669"/>
    <property type="project" value="TreeGrafter"/>
</dbReference>
<dbReference type="GO" id="GO:0042254">
    <property type="term" value="P:ribosome biogenesis"/>
    <property type="evidence" value="ECO:0007669"/>
    <property type="project" value="UniProtKB-KW"/>
</dbReference>
<dbReference type="CDD" id="cd01894">
    <property type="entry name" value="EngA1"/>
    <property type="match status" value="1"/>
</dbReference>
<dbReference type="CDD" id="cd01895">
    <property type="entry name" value="EngA2"/>
    <property type="match status" value="1"/>
</dbReference>
<dbReference type="FunFam" id="3.30.300.20:FF:000004">
    <property type="entry name" value="GTPase Der"/>
    <property type="match status" value="1"/>
</dbReference>
<dbReference type="FunFam" id="3.40.50.300:FF:000040">
    <property type="entry name" value="GTPase Der"/>
    <property type="match status" value="1"/>
</dbReference>
<dbReference type="FunFam" id="3.40.50.300:FF:000057">
    <property type="entry name" value="GTPase Der"/>
    <property type="match status" value="1"/>
</dbReference>
<dbReference type="Gene3D" id="3.30.300.20">
    <property type="match status" value="1"/>
</dbReference>
<dbReference type="Gene3D" id="3.40.50.300">
    <property type="entry name" value="P-loop containing nucleotide triphosphate hydrolases"/>
    <property type="match status" value="2"/>
</dbReference>
<dbReference type="HAMAP" id="MF_00195">
    <property type="entry name" value="GTPase_Der"/>
    <property type="match status" value="1"/>
</dbReference>
<dbReference type="InterPro" id="IPR031166">
    <property type="entry name" value="G_ENGA"/>
</dbReference>
<dbReference type="InterPro" id="IPR006073">
    <property type="entry name" value="GTP-bd"/>
</dbReference>
<dbReference type="InterPro" id="IPR016484">
    <property type="entry name" value="GTPase_Der"/>
</dbReference>
<dbReference type="InterPro" id="IPR032859">
    <property type="entry name" value="KH_dom-like"/>
</dbReference>
<dbReference type="InterPro" id="IPR015946">
    <property type="entry name" value="KH_dom-like_a/b"/>
</dbReference>
<dbReference type="InterPro" id="IPR027417">
    <property type="entry name" value="P-loop_NTPase"/>
</dbReference>
<dbReference type="InterPro" id="IPR005225">
    <property type="entry name" value="Small_GTP-bd"/>
</dbReference>
<dbReference type="NCBIfam" id="TIGR03594">
    <property type="entry name" value="GTPase_EngA"/>
    <property type="match status" value="1"/>
</dbReference>
<dbReference type="NCBIfam" id="TIGR00231">
    <property type="entry name" value="small_GTP"/>
    <property type="match status" value="2"/>
</dbReference>
<dbReference type="PANTHER" id="PTHR43834">
    <property type="entry name" value="GTPASE DER"/>
    <property type="match status" value="1"/>
</dbReference>
<dbReference type="PANTHER" id="PTHR43834:SF6">
    <property type="entry name" value="GTPASE DER"/>
    <property type="match status" value="1"/>
</dbReference>
<dbReference type="Pfam" id="PF14714">
    <property type="entry name" value="KH_dom-like"/>
    <property type="match status" value="1"/>
</dbReference>
<dbReference type="Pfam" id="PF01926">
    <property type="entry name" value="MMR_HSR1"/>
    <property type="match status" value="2"/>
</dbReference>
<dbReference type="PIRSF" id="PIRSF006485">
    <property type="entry name" value="GTP-binding_EngA"/>
    <property type="match status" value="1"/>
</dbReference>
<dbReference type="PRINTS" id="PR00326">
    <property type="entry name" value="GTP1OBG"/>
</dbReference>
<dbReference type="SUPFAM" id="SSF52540">
    <property type="entry name" value="P-loop containing nucleoside triphosphate hydrolases"/>
    <property type="match status" value="2"/>
</dbReference>
<dbReference type="PROSITE" id="PS51712">
    <property type="entry name" value="G_ENGA"/>
    <property type="match status" value="2"/>
</dbReference>
<protein>
    <recommendedName>
        <fullName evidence="1">GTPase Der</fullName>
    </recommendedName>
    <alternativeName>
        <fullName evidence="1">GTP-binding protein EngA</fullName>
    </alternativeName>
</protein>
<evidence type="ECO:0000255" key="1">
    <source>
        <dbReference type="HAMAP-Rule" id="MF_00195"/>
    </source>
</evidence>
<evidence type="ECO:0000256" key="2">
    <source>
        <dbReference type="SAM" id="MobiDB-lite"/>
    </source>
</evidence>
<proteinExistence type="inferred from homology"/>
<sequence length="493" mass="55034">MVPVIALVGRPNVGKSTLFNRLTKSRDAIVAEYAGLTRDRQYGEARWQGRTYIVIDTGGISGDEEGIDAKMAEQSLQAIEEADAVLFLVDSRAGMTAADQMIAEHLRKRNKRSFLIANKVDTIDPDLARAEFSPLGLGDALPIAAAHGRGINHMLQEALGIFPKDNVEEEGEGEPASEEVAEGEEPTRIPGPSEKDGIKIAIIGRPNVGKSTLVNRMLGEERVIVYDQAGTTRDSIYIPFERNEEKYTLIDTAGVRRRGKIFEAVEKFSVVKTLQAIQDANVVIFVMDAREGVVEHDLNLLGFVLETGRALVIALNKWDGMEAAERDYVKTELERRLLFVDFADIHFISALHGTGVGHLYKSVQESFRSAVTRWPTSRLTSILEDAVQVHQPPMVNGRRIKLRYAHLGGANPPLIVIHGNQVDAVPKAYTRYLEKTYRRVLKLVGTPIRIEYKGGENPYEGKKNSLTARQVNKKRRLMSHHKKAEKKKKDKRR</sequence>
<organism>
    <name type="scientific">Pseudomonas aeruginosa (strain LESB58)</name>
    <dbReference type="NCBI Taxonomy" id="557722"/>
    <lineage>
        <taxon>Bacteria</taxon>
        <taxon>Pseudomonadati</taxon>
        <taxon>Pseudomonadota</taxon>
        <taxon>Gammaproteobacteria</taxon>
        <taxon>Pseudomonadales</taxon>
        <taxon>Pseudomonadaceae</taxon>
        <taxon>Pseudomonas</taxon>
    </lineage>
</organism>
<gene>
    <name evidence="1" type="primary">der</name>
    <name type="synonym">engA</name>
    <name type="ordered locus">PLES_11751</name>
</gene>
<accession>B7UWJ2</accession>
<comment type="function">
    <text evidence="1">GTPase that plays an essential role in the late steps of ribosome biogenesis.</text>
</comment>
<comment type="subunit">
    <text evidence="1">Associates with the 50S ribosomal subunit.</text>
</comment>
<comment type="similarity">
    <text evidence="1">Belongs to the TRAFAC class TrmE-Era-EngA-EngB-Septin-like GTPase superfamily. EngA (Der) GTPase family.</text>
</comment>